<name>PREA_CYAPA</name>
<organism>
    <name type="scientific">Cyanophora paradoxa</name>
    <dbReference type="NCBI Taxonomy" id="2762"/>
    <lineage>
        <taxon>Eukaryota</taxon>
        <taxon>Glaucocystophyceae</taxon>
        <taxon>Cyanophoraceae</taxon>
        <taxon>Cyanophora</taxon>
    </lineage>
</organism>
<accession>P31171</accession>
<reference key="1">
    <citation type="journal article" date="1991" name="J. Biol. Chem.">
        <title>An ORF323 with homology to crtE, specifying prephytoene pyrophosphate dehydrogenase, is encoded by cyanelle DNA in the eukaryotic alga Cyanophora paradoxa.</title>
        <authorList>
            <person name="Michalowski C.B."/>
            <person name="Loeffelhardt W."/>
            <person name="Bohnert H.J."/>
        </authorList>
    </citation>
    <scope>NUCLEOTIDE SEQUENCE [GENOMIC DNA]</scope>
    <source>
        <strain>UTEX LB 555 / Pringsheim</strain>
    </source>
</reference>
<reference key="2">
    <citation type="journal article" date="1995" name="Plant Mol. Biol. Rep.">
        <title>Nucleotide sequence of the cyanelle DNA from Cyanophora paradoxa.</title>
        <authorList>
            <person name="Stirewalt V.L."/>
            <person name="Michalowski C.B."/>
            <person name="Loeffelhardt W."/>
            <person name="Bohnert H.J."/>
            <person name="Bryant D.A."/>
        </authorList>
    </citation>
    <scope>NUCLEOTIDE SEQUENCE [LARGE SCALE GENOMIC DNA]</scope>
    <source>
        <strain>UTEX LB 555 / Pringsheim</strain>
    </source>
</reference>
<reference key="3">
    <citation type="book" date="1997" name="Eukaryotism and symbiosis">
        <title>The complete sequence of the cyanelle genome of Cyanophora paradoxa: the genetic complexity of a primitive plastid.</title>
        <editorList>
            <person name="Schenk H.E.A."/>
            <person name="Herrmann R."/>
            <person name="Jeon K.W."/>
            <person name="Mueller N.E."/>
            <person name="Schwemmler W."/>
        </editorList>
        <authorList>
            <person name="Loeffelhardt W."/>
            <person name="Stirewalt V.L."/>
            <person name="Michalowski C.B."/>
            <person name="Annarella M."/>
            <person name="Farley J.Y."/>
            <person name="Schluchter W.M."/>
            <person name="Chung S."/>
            <person name="Newmann-Spallart C."/>
            <person name="Steiner J.M."/>
            <person name="Jakowitsch J."/>
            <person name="Bohnert H.J."/>
            <person name="Bryant D.A."/>
        </authorList>
    </citation>
    <scope>NUCLEOTIDE SEQUENCE [LARGE SCALE GENOMIC DNA]</scope>
    <source>
        <strain>UTEX LB 555 / Pringsheim</strain>
    </source>
</reference>
<reference key="4">
    <citation type="journal article" date="1990" name="Mol. Gen. Genet.">
        <title>The cyanelle S10 spc ribosomal protein gene operon from Cyanophora paradoxa.</title>
        <authorList>
            <person name="Michalowski C.B."/>
            <person name="Pfanzagl B."/>
            <person name="Loeffelhardt W."/>
            <person name="Bohnert H.J."/>
        </authorList>
    </citation>
    <scope>NUCLEOTIDE SEQUENCE [GENOMIC DNA] OF 1-46</scope>
    <source>
        <strain>UTEX LB 555 / Pringsheim</strain>
    </source>
</reference>
<geneLocation type="cyanelle"/>
<sequence length="323" mass="35919">MASITNILAPVENELDLLTKNLKKLVGSGHPILSAASEHLFSASGKRPRPAIVLLISKATMENEIITSRHRRLAEITEIIHTASLVHDDILDESDVRRGIPTVHSDFGTKIAILAGDFLFAQSSWYLANLESLEVVKLISKVITDFAEGEIRRGLNQFKVDLTLEEYLEKSFYKTASLLAASSKAAALLSHVDLTVANDLYNYGRHLGLAFQIVDDILDFTSSTEELGKPSCSDLKKGNLTAPVLFALEQNSELIPLIQRQFSEPKDFEYTLQIVEETKAIEKTRELAMEHAQVAIQCLENLPPSSSKEALKLITKYVLERLY</sequence>
<feature type="chain" id="PRO_0000123998" description="Prenyl transferase">
    <location>
        <begin position="1"/>
        <end position="323"/>
    </location>
</feature>
<feature type="binding site" evidence="2">
    <location>
        <position position="46"/>
    </location>
    <ligand>
        <name>isopentenyl diphosphate</name>
        <dbReference type="ChEBI" id="CHEBI:128769"/>
    </ligand>
</feature>
<feature type="binding site" evidence="2">
    <location>
        <position position="49"/>
    </location>
    <ligand>
        <name>isopentenyl diphosphate</name>
        <dbReference type="ChEBI" id="CHEBI:128769"/>
    </ligand>
</feature>
<feature type="binding site" evidence="3">
    <location>
        <position position="81"/>
    </location>
    <ligand>
        <name>isopentenyl diphosphate</name>
        <dbReference type="ChEBI" id="CHEBI:128769"/>
    </ligand>
</feature>
<feature type="binding site" evidence="2">
    <location>
        <position position="88"/>
    </location>
    <ligand>
        <name>Mg(2+)</name>
        <dbReference type="ChEBI" id="CHEBI:18420"/>
        <label>1</label>
    </ligand>
</feature>
<feature type="binding site" evidence="2">
    <location>
        <position position="88"/>
    </location>
    <ligand>
        <name>Mg(2+)</name>
        <dbReference type="ChEBI" id="CHEBI:18420"/>
        <label>2</label>
    </ligand>
</feature>
<feature type="binding site" evidence="2">
    <location>
        <position position="92"/>
    </location>
    <ligand>
        <name>Mg(2+)</name>
        <dbReference type="ChEBI" id="CHEBI:18420"/>
        <label>1</label>
    </ligand>
</feature>
<feature type="binding site" evidence="2">
    <location>
        <position position="92"/>
    </location>
    <ligand>
        <name>Mg(2+)</name>
        <dbReference type="ChEBI" id="CHEBI:18420"/>
        <label>2</label>
    </ligand>
</feature>
<feature type="binding site" evidence="1">
    <location>
        <position position="97"/>
    </location>
    <ligand>
        <name>an all-trans-polyprenyl diphosphate</name>
        <dbReference type="ChEBI" id="CHEBI:58914"/>
    </ligand>
</feature>
<feature type="binding site" evidence="2">
    <location>
        <position position="98"/>
    </location>
    <ligand>
        <name>isopentenyl diphosphate</name>
        <dbReference type="ChEBI" id="CHEBI:128769"/>
    </ligand>
</feature>
<feature type="binding site" evidence="1">
    <location>
        <position position="174"/>
    </location>
    <ligand>
        <name>an all-trans-polyprenyl diphosphate</name>
        <dbReference type="ChEBI" id="CHEBI:58914"/>
    </ligand>
</feature>
<feature type="binding site" evidence="1">
    <location>
        <position position="175"/>
    </location>
    <ligand>
        <name>an all-trans-polyprenyl diphosphate</name>
        <dbReference type="ChEBI" id="CHEBI:58914"/>
    </ligand>
</feature>
<feature type="binding site" evidence="1">
    <location>
        <position position="212"/>
    </location>
    <ligand>
        <name>an all-trans-polyprenyl diphosphate</name>
        <dbReference type="ChEBI" id="CHEBI:58914"/>
    </ligand>
</feature>
<dbReference type="EC" id="2.5.1.-"/>
<dbReference type="EMBL" id="M37111">
    <property type="protein sequence ID" value="AAA65472.1"/>
    <property type="molecule type" value="Genomic_DNA"/>
</dbReference>
<dbReference type="EMBL" id="U30821">
    <property type="protein sequence ID" value="AAA81217.1"/>
    <property type="molecule type" value="Genomic_DNA"/>
</dbReference>
<dbReference type="EMBL" id="M30487">
    <property type="protein sequence ID" value="AAA63631.1"/>
    <property type="molecule type" value="Genomic_DNA"/>
</dbReference>
<dbReference type="PIR" id="A40433">
    <property type="entry name" value="A40433"/>
</dbReference>
<dbReference type="PIR" id="T06874">
    <property type="entry name" value="T06874"/>
</dbReference>
<dbReference type="RefSeq" id="NP_043186.1">
    <property type="nucleotide sequence ID" value="NC_001675.1"/>
</dbReference>
<dbReference type="SMR" id="P31171"/>
<dbReference type="GeneID" id="801615"/>
<dbReference type="GO" id="GO:0009842">
    <property type="term" value="C:cyanelle"/>
    <property type="evidence" value="ECO:0007669"/>
    <property type="project" value="UniProtKB-SubCell"/>
</dbReference>
<dbReference type="GO" id="GO:0046872">
    <property type="term" value="F:metal ion binding"/>
    <property type="evidence" value="ECO:0007669"/>
    <property type="project" value="UniProtKB-KW"/>
</dbReference>
<dbReference type="GO" id="GO:0004659">
    <property type="term" value="F:prenyltransferase activity"/>
    <property type="evidence" value="ECO:0007669"/>
    <property type="project" value="InterPro"/>
</dbReference>
<dbReference type="GO" id="GO:0008299">
    <property type="term" value="P:isoprenoid biosynthetic process"/>
    <property type="evidence" value="ECO:0007669"/>
    <property type="project" value="UniProtKB-KW"/>
</dbReference>
<dbReference type="GO" id="GO:0015979">
    <property type="term" value="P:photosynthesis"/>
    <property type="evidence" value="ECO:0007669"/>
    <property type="project" value="UniProtKB-KW"/>
</dbReference>
<dbReference type="GO" id="GO:1901663">
    <property type="term" value="P:quinone biosynthetic process"/>
    <property type="evidence" value="ECO:0007669"/>
    <property type="project" value="UniProtKB-ARBA"/>
</dbReference>
<dbReference type="CDD" id="cd00685">
    <property type="entry name" value="Trans_IPPS_HT"/>
    <property type="match status" value="1"/>
</dbReference>
<dbReference type="Gene3D" id="1.10.600.10">
    <property type="entry name" value="Farnesyl Diphosphate Synthase"/>
    <property type="match status" value="1"/>
</dbReference>
<dbReference type="InterPro" id="IPR008949">
    <property type="entry name" value="Isoprenoid_synthase_dom_sf"/>
</dbReference>
<dbReference type="InterPro" id="IPR000092">
    <property type="entry name" value="Polyprenyl_synt"/>
</dbReference>
<dbReference type="InterPro" id="IPR033749">
    <property type="entry name" value="Polyprenyl_synt_CS"/>
</dbReference>
<dbReference type="NCBIfam" id="TIGR02749">
    <property type="entry name" value="prenyl_cyano"/>
    <property type="match status" value="1"/>
</dbReference>
<dbReference type="PANTHER" id="PTHR12001:SF69">
    <property type="entry name" value="ALL TRANS-POLYPRENYL-DIPHOSPHATE SYNTHASE PDSS1"/>
    <property type="match status" value="1"/>
</dbReference>
<dbReference type="PANTHER" id="PTHR12001">
    <property type="entry name" value="GERANYLGERANYL PYROPHOSPHATE SYNTHASE"/>
    <property type="match status" value="1"/>
</dbReference>
<dbReference type="Pfam" id="PF00348">
    <property type="entry name" value="polyprenyl_synt"/>
    <property type="match status" value="1"/>
</dbReference>
<dbReference type="SFLD" id="SFLDS00005">
    <property type="entry name" value="Isoprenoid_Synthase_Type_I"/>
    <property type="match status" value="1"/>
</dbReference>
<dbReference type="SUPFAM" id="SSF48576">
    <property type="entry name" value="Terpenoid synthases"/>
    <property type="match status" value="1"/>
</dbReference>
<dbReference type="PROSITE" id="PS00723">
    <property type="entry name" value="POLYPRENYL_SYNTHASE_1"/>
    <property type="match status" value="1"/>
</dbReference>
<dbReference type="PROSITE" id="PS00444">
    <property type="entry name" value="POLYPRENYL_SYNTHASE_2"/>
    <property type="match status" value="1"/>
</dbReference>
<gene>
    <name type="primary">preA</name>
</gene>
<evidence type="ECO:0000250" key="1"/>
<evidence type="ECO:0000250" key="2">
    <source>
        <dbReference type="UniProtKB" id="P14324"/>
    </source>
</evidence>
<evidence type="ECO:0000250" key="3">
    <source>
        <dbReference type="UniProtKB" id="Q12051"/>
    </source>
</evidence>
<evidence type="ECO:0000305" key="4"/>
<evidence type="ECO:0000305" key="5">
    <source>
    </source>
</evidence>
<keyword id="KW-0194">Cyanelle</keyword>
<keyword id="KW-0414">Isoprene biosynthesis</keyword>
<keyword id="KW-0460">Magnesium</keyword>
<keyword id="KW-0479">Metal-binding</keyword>
<keyword id="KW-0602">Photosynthesis</keyword>
<keyword id="KW-0934">Plastid</keyword>
<keyword id="KW-0808">Transferase</keyword>
<protein>
    <recommendedName>
        <fullName>Prenyl transferase</fullName>
        <ecNumber>2.5.1.-</ecNumber>
    </recommendedName>
</protein>
<comment type="function">
    <text>Possible role in synthesis of the nonaprenyl side chain of plastoquinone or in synthesis of other prenyl chains such as undekaprenyl pyrophosphate.</text>
</comment>
<comment type="cofactor">
    <cofactor evidence="1">
        <name>Mg(2+)</name>
        <dbReference type="ChEBI" id="CHEBI:18420"/>
    </cofactor>
    <text evidence="1">Binds 2 Mg(2+) ions per subunit.</text>
</comment>
<comment type="subcellular location">
    <subcellularLocation>
        <location>Plastid</location>
        <location>Cyanelle</location>
    </subcellularLocation>
</comment>
<comment type="similarity">
    <text evidence="4">Belongs to the FPP/GGPP synthase family.</text>
</comment>
<comment type="caution">
    <text evidence="5">Was originally called crtE.</text>
</comment>
<proteinExistence type="inferred from homology"/>